<keyword id="KW-0227">DNA damage</keyword>
<keyword id="KW-0234">DNA repair</keyword>
<keyword id="KW-0255">Endonuclease</keyword>
<keyword id="KW-0378">Hydrolase</keyword>
<keyword id="KW-0479">Metal-binding</keyword>
<keyword id="KW-0540">Nuclease</keyword>
<keyword id="KW-0862">Zinc</keyword>
<evidence type="ECO:0000255" key="1">
    <source>
        <dbReference type="HAMAP-Rule" id="MF_00152"/>
    </source>
</evidence>
<comment type="function">
    <text evidence="1">Endonuclease IV plays a role in DNA repair. It cleaves phosphodiester bonds at apurinic or apyrimidinic (AP) sites, generating a 3'-hydroxyl group and a 5'-terminal sugar phosphate.</text>
</comment>
<comment type="catalytic activity">
    <reaction evidence="1">
        <text>Endonucleolytic cleavage to 5'-phosphooligonucleotide end-products.</text>
        <dbReference type="EC" id="3.1.21.2"/>
    </reaction>
</comment>
<comment type="cofactor">
    <cofactor evidence="1">
        <name>Zn(2+)</name>
        <dbReference type="ChEBI" id="CHEBI:29105"/>
    </cofactor>
    <text evidence="1">Binds 3 Zn(2+) ions.</text>
</comment>
<comment type="similarity">
    <text evidence="1">Belongs to the AP endonuclease 2 family.</text>
</comment>
<protein>
    <recommendedName>
        <fullName evidence="1">Probable endonuclease 4</fullName>
        <ecNumber evidence="1">3.1.21.2</ecNumber>
    </recommendedName>
    <alternativeName>
        <fullName evidence="1">Endodeoxyribonuclease IV</fullName>
    </alternativeName>
    <alternativeName>
        <fullName evidence="1">Endonuclease IV</fullName>
    </alternativeName>
</protein>
<gene>
    <name evidence="1" type="primary">nfo</name>
    <name type="ordered locus">ECSE_2427</name>
</gene>
<dbReference type="EC" id="3.1.21.2" evidence="1"/>
<dbReference type="EMBL" id="AP009240">
    <property type="protein sequence ID" value="BAG77951.1"/>
    <property type="molecule type" value="Genomic_DNA"/>
</dbReference>
<dbReference type="RefSeq" id="WP_000873890.1">
    <property type="nucleotide sequence ID" value="NC_011415.1"/>
</dbReference>
<dbReference type="SMR" id="B6I8L0"/>
<dbReference type="GeneID" id="93775023"/>
<dbReference type="KEGG" id="ecy:ECSE_2427"/>
<dbReference type="HOGENOM" id="CLU_025885_0_4_6"/>
<dbReference type="Proteomes" id="UP000008199">
    <property type="component" value="Chromosome"/>
</dbReference>
<dbReference type="GO" id="GO:0008833">
    <property type="term" value="F:deoxyribonuclease IV (phage-T4-induced) activity"/>
    <property type="evidence" value="ECO:0007669"/>
    <property type="project" value="UniProtKB-UniRule"/>
</dbReference>
<dbReference type="GO" id="GO:0003677">
    <property type="term" value="F:DNA binding"/>
    <property type="evidence" value="ECO:0007669"/>
    <property type="project" value="InterPro"/>
</dbReference>
<dbReference type="GO" id="GO:0003906">
    <property type="term" value="F:DNA-(apurinic or apyrimidinic site) endonuclease activity"/>
    <property type="evidence" value="ECO:0007669"/>
    <property type="project" value="TreeGrafter"/>
</dbReference>
<dbReference type="GO" id="GO:0008081">
    <property type="term" value="F:phosphoric diester hydrolase activity"/>
    <property type="evidence" value="ECO:0007669"/>
    <property type="project" value="TreeGrafter"/>
</dbReference>
<dbReference type="GO" id="GO:0008270">
    <property type="term" value="F:zinc ion binding"/>
    <property type="evidence" value="ECO:0007669"/>
    <property type="project" value="UniProtKB-UniRule"/>
</dbReference>
<dbReference type="GO" id="GO:0006284">
    <property type="term" value="P:base-excision repair"/>
    <property type="evidence" value="ECO:0007669"/>
    <property type="project" value="TreeGrafter"/>
</dbReference>
<dbReference type="CDD" id="cd00019">
    <property type="entry name" value="AP2Ec"/>
    <property type="match status" value="1"/>
</dbReference>
<dbReference type="FunFam" id="3.20.20.150:FF:000001">
    <property type="entry name" value="Probable endonuclease 4"/>
    <property type="match status" value="1"/>
</dbReference>
<dbReference type="Gene3D" id="3.20.20.150">
    <property type="entry name" value="Divalent-metal-dependent TIM barrel enzymes"/>
    <property type="match status" value="1"/>
</dbReference>
<dbReference type="HAMAP" id="MF_00152">
    <property type="entry name" value="Nfo"/>
    <property type="match status" value="1"/>
</dbReference>
<dbReference type="InterPro" id="IPR001719">
    <property type="entry name" value="AP_endonuc_2"/>
</dbReference>
<dbReference type="InterPro" id="IPR018246">
    <property type="entry name" value="AP_endonuc_F2_Zn_BS"/>
</dbReference>
<dbReference type="InterPro" id="IPR036237">
    <property type="entry name" value="Xyl_isomerase-like_sf"/>
</dbReference>
<dbReference type="InterPro" id="IPR013022">
    <property type="entry name" value="Xyl_isomerase-like_TIM-brl"/>
</dbReference>
<dbReference type="NCBIfam" id="TIGR00587">
    <property type="entry name" value="nfo"/>
    <property type="match status" value="1"/>
</dbReference>
<dbReference type="NCBIfam" id="NF002199">
    <property type="entry name" value="PRK01060.1-4"/>
    <property type="match status" value="1"/>
</dbReference>
<dbReference type="PANTHER" id="PTHR21445:SF0">
    <property type="entry name" value="APURINIC-APYRIMIDINIC ENDONUCLEASE"/>
    <property type="match status" value="1"/>
</dbReference>
<dbReference type="PANTHER" id="PTHR21445">
    <property type="entry name" value="ENDONUCLEASE IV ENDODEOXYRIBONUCLEASE IV"/>
    <property type="match status" value="1"/>
</dbReference>
<dbReference type="Pfam" id="PF01261">
    <property type="entry name" value="AP_endonuc_2"/>
    <property type="match status" value="1"/>
</dbReference>
<dbReference type="SMART" id="SM00518">
    <property type="entry name" value="AP2Ec"/>
    <property type="match status" value="1"/>
</dbReference>
<dbReference type="SUPFAM" id="SSF51658">
    <property type="entry name" value="Xylose isomerase-like"/>
    <property type="match status" value="1"/>
</dbReference>
<dbReference type="PROSITE" id="PS00729">
    <property type="entry name" value="AP_NUCLEASE_F2_1"/>
    <property type="match status" value="1"/>
</dbReference>
<dbReference type="PROSITE" id="PS00730">
    <property type="entry name" value="AP_NUCLEASE_F2_2"/>
    <property type="match status" value="1"/>
</dbReference>
<dbReference type="PROSITE" id="PS00731">
    <property type="entry name" value="AP_NUCLEASE_F2_3"/>
    <property type="match status" value="1"/>
</dbReference>
<dbReference type="PROSITE" id="PS51432">
    <property type="entry name" value="AP_NUCLEASE_F2_4"/>
    <property type="match status" value="1"/>
</dbReference>
<feature type="chain" id="PRO_1000096881" description="Probable endonuclease 4">
    <location>
        <begin position="1"/>
        <end position="285"/>
    </location>
</feature>
<feature type="binding site" evidence="1">
    <location>
        <position position="69"/>
    </location>
    <ligand>
        <name>Zn(2+)</name>
        <dbReference type="ChEBI" id="CHEBI:29105"/>
        <label>1</label>
    </ligand>
</feature>
<feature type="binding site" evidence="1">
    <location>
        <position position="109"/>
    </location>
    <ligand>
        <name>Zn(2+)</name>
        <dbReference type="ChEBI" id="CHEBI:29105"/>
        <label>1</label>
    </ligand>
</feature>
<feature type="binding site" evidence="1">
    <location>
        <position position="145"/>
    </location>
    <ligand>
        <name>Zn(2+)</name>
        <dbReference type="ChEBI" id="CHEBI:29105"/>
        <label>1</label>
    </ligand>
</feature>
<feature type="binding site" evidence="1">
    <location>
        <position position="145"/>
    </location>
    <ligand>
        <name>Zn(2+)</name>
        <dbReference type="ChEBI" id="CHEBI:29105"/>
        <label>2</label>
    </ligand>
</feature>
<feature type="binding site" evidence="1">
    <location>
        <position position="179"/>
    </location>
    <ligand>
        <name>Zn(2+)</name>
        <dbReference type="ChEBI" id="CHEBI:29105"/>
        <label>2</label>
    </ligand>
</feature>
<feature type="binding site" evidence="1">
    <location>
        <position position="182"/>
    </location>
    <ligand>
        <name>Zn(2+)</name>
        <dbReference type="ChEBI" id="CHEBI:29105"/>
        <label>3</label>
    </ligand>
</feature>
<feature type="binding site" evidence="1">
    <location>
        <position position="216"/>
    </location>
    <ligand>
        <name>Zn(2+)</name>
        <dbReference type="ChEBI" id="CHEBI:29105"/>
        <label>2</label>
    </ligand>
</feature>
<feature type="binding site" evidence="1">
    <location>
        <position position="229"/>
    </location>
    <ligand>
        <name>Zn(2+)</name>
        <dbReference type="ChEBI" id="CHEBI:29105"/>
        <label>3</label>
    </ligand>
</feature>
<feature type="binding site" evidence="1">
    <location>
        <position position="231"/>
    </location>
    <ligand>
        <name>Zn(2+)</name>
        <dbReference type="ChEBI" id="CHEBI:29105"/>
        <label>3</label>
    </ligand>
</feature>
<feature type="binding site" evidence="1">
    <location>
        <position position="261"/>
    </location>
    <ligand>
        <name>Zn(2+)</name>
        <dbReference type="ChEBI" id="CHEBI:29105"/>
        <label>2</label>
    </ligand>
</feature>
<reference key="1">
    <citation type="journal article" date="2008" name="DNA Res.">
        <title>Complete genome sequence and comparative analysis of the wild-type commensal Escherichia coli strain SE11 isolated from a healthy adult.</title>
        <authorList>
            <person name="Oshima K."/>
            <person name="Toh H."/>
            <person name="Ogura Y."/>
            <person name="Sasamoto H."/>
            <person name="Morita H."/>
            <person name="Park S.-H."/>
            <person name="Ooka T."/>
            <person name="Iyoda S."/>
            <person name="Taylor T.D."/>
            <person name="Hayashi T."/>
            <person name="Itoh K."/>
            <person name="Hattori M."/>
        </authorList>
    </citation>
    <scope>NUCLEOTIDE SEQUENCE [LARGE SCALE GENOMIC DNA]</scope>
    <source>
        <strain>SE11</strain>
    </source>
</reference>
<name>END4_ECOSE</name>
<proteinExistence type="inferred from homology"/>
<accession>B6I8L0</accession>
<organism>
    <name type="scientific">Escherichia coli (strain SE11)</name>
    <dbReference type="NCBI Taxonomy" id="409438"/>
    <lineage>
        <taxon>Bacteria</taxon>
        <taxon>Pseudomonadati</taxon>
        <taxon>Pseudomonadota</taxon>
        <taxon>Gammaproteobacteria</taxon>
        <taxon>Enterobacterales</taxon>
        <taxon>Enterobacteriaceae</taxon>
        <taxon>Escherichia</taxon>
    </lineage>
</organism>
<sequence>MKYIGAHVSAAGGLANAAIRAAEIDATAFALFTKNQRQWRAAPLTTQTIDEFKAACEKYHYTSAQILPHDSYLINLGHPVTEALEKSRDAFIDEMQRCEQLGLSLLNFHPGSHLMQISEEDCLARIAESINIALDKTQGVTAVIENTAGQGSNLGFKFEHLAAIIDGVEDKSRVGVCIDTCHAFAAGYDLRTPAECEKTFADFARIVGFKYLRGMHLNDAKSTFGSRVDRHHSLGEGNIGHDAFRWIMQDDRFDGIPLILETINPDIWAEEIAWLKAQQTEKAVA</sequence>